<accession>P0C5K9</accession>
<name>YB39A_YEAST</name>
<organism>
    <name type="scientific">Saccharomyces cerevisiae (strain ATCC 204508 / S288c)</name>
    <name type="common">Baker's yeast</name>
    <dbReference type="NCBI Taxonomy" id="559292"/>
    <lineage>
        <taxon>Eukaryota</taxon>
        <taxon>Fungi</taxon>
        <taxon>Dikarya</taxon>
        <taxon>Ascomycota</taxon>
        <taxon>Saccharomycotina</taxon>
        <taxon>Saccharomycetes</taxon>
        <taxon>Saccharomycetales</taxon>
        <taxon>Saccharomycetaceae</taxon>
        <taxon>Saccharomyces</taxon>
    </lineage>
</organism>
<proteinExistence type="evidence at protein level"/>
<keyword id="KW-1185">Reference proteome</keyword>
<gene>
    <name type="ordered locus">YBL039C-A</name>
</gene>
<dbReference type="EMBL" id="X78214">
    <property type="status" value="NOT_ANNOTATED_CDS"/>
    <property type="molecule type" value="Genomic_DNA"/>
</dbReference>
<dbReference type="EMBL" id="Z35800">
    <property type="status" value="NOT_ANNOTATED_CDS"/>
    <property type="molecule type" value="Genomic_DNA"/>
</dbReference>
<dbReference type="EMBL" id="BK006936">
    <property type="status" value="NOT_ANNOTATED_CDS"/>
    <property type="molecule type" value="Genomic_DNA"/>
</dbReference>
<dbReference type="STRING" id="4932.YBL039C-A"/>
<dbReference type="PaxDb" id="4932-YBL039C-A"/>
<dbReference type="EnsemblFungi" id="YBL039C-A_mRNA">
    <property type="protein sequence ID" value="YBL039C-A"/>
    <property type="gene ID" value="YBL039C-A"/>
</dbReference>
<dbReference type="AGR" id="SGD:S000028814"/>
<dbReference type="SGD" id="S000028814">
    <property type="gene designation" value="YBL039C-A"/>
</dbReference>
<dbReference type="HOGENOM" id="CLU_3415273_0_0_1"/>
<dbReference type="InParanoid" id="P0C5K9"/>
<dbReference type="PRO" id="PR:P0C5K9"/>
<dbReference type="Proteomes" id="UP000002311">
    <property type="component" value="Chromosome II"/>
</dbReference>
<feature type="chain" id="PRO_0000309007" description="Uncharacterized protein YBL039C-A">
    <location>
        <begin position="1"/>
        <end position="27"/>
    </location>
</feature>
<protein>
    <recommendedName>
        <fullName>Uncharacterized protein YBL039C-A</fullName>
    </recommendedName>
</protein>
<reference key="1">
    <citation type="journal article" date="1994" name="Yeast">
        <title>The sequence of a 22.4 kb DNA fragment from the left arm of yeast chromosome II reveals homologues to bacterial proline synthetase and murine alpha-adaptin, as well as a new permease and a DNA-binding protein.</title>
        <authorList>
            <person name="de Wergifosse P."/>
            <person name="Jacques B."/>
            <person name="Jonniaux J.-L."/>
            <person name="Purnelle B."/>
            <person name="Skala J."/>
            <person name="Goffeau A."/>
        </authorList>
    </citation>
    <scope>NUCLEOTIDE SEQUENCE [GENOMIC DNA]</scope>
    <source>
        <strain>ATCC 204508 / S288c</strain>
    </source>
</reference>
<reference key="2">
    <citation type="journal article" date="1994" name="EMBO J.">
        <title>Complete DNA sequence of yeast chromosome II.</title>
        <authorList>
            <person name="Feldmann H."/>
            <person name="Aigle M."/>
            <person name="Aljinovic G."/>
            <person name="Andre B."/>
            <person name="Baclet M.C."/>
            <person name="Barthe C."/>
            <person name="Baur A."/>
            <person name="Becam A.-M."/>
            <person name="Biteau N."/>
            <person name="Boles E."/>
            <person name="Brandt T."/>
            <person name="Brendel M."/>
            <person name="Brueckner M."/>
            <person name="Bussereau F."/>
            <person name="Christiansen C."/>
            <person name="Contreras R."/>
            <person name="Crouzet M."/>
            <person name="Cziepluch C."/>
            <person name="Demolis N."/>
            <person name="Delaveau T."/>
            <person name="Doignon F."/>
            <person name="Domdey H."/>
            <person name="Duesterhus S."/>
            <person name="Dubois E."/>
            <person name="Dujon B."/>
            <person name="El Bakkoury M."/>
            <person name="Entian K.-D."/>
            <person name="Feuermann M."/>
            <person name="Fiers W."/>
            <person name="Fobo G.M."/>
            <person name="Fritz C."/>
            <person name="Gassenhuber J."/>
            <person name="Glansdorff N."/>
            <person name="Goffeau A."/>
            <person name="Grivell L.A."/>
            <person name="de Haan M."/>
            <person name="Hein C."/>
            <person name="Herbert C.J."/>
            <person name="Hollenberg C.P."/>
            <person name="Holmstroem K."/>
            <person name="Jacq C."/>
            <person name="Jacquet M."/>
            <person name="Jauniaux J.-C."/>
            <person name="Jonniaux J.-L."/>
            <person name="Kallesoee T."/>
            <person name="Kiesau P."/>
            <person name="Kirchrath L."/>
            <person name="Koetter P."/>
            <person name="Korol S."/>
            <person name="Liebl S."/>
            <person name="Logghe M."/>
            <person name="Lohan A.J.E."/>
            <person name="Louis E.J."/>
            <person name="Li Z.Y."/>
            <person name="Maat M.J."/>
            <person name="Mallet L."/>
            <person name="Mannhaupt G."/>
            <person name="Messenguy F."/>
            <person name="Miosga T."/>
            <person name="Molemans F."/>
            <person name="Mueller S."/>
            <person name="Nasr F."/>
            <person name="Obermaier B."/>
            <person name="Perea J."/>
            <person name="Pierard A."/>
            <person name="Piravandi E."/>
            <person name="Pohl F.M."/>
            <person name="Pohl T.M."/>
            <person name="Potier S."/>
            <person name="Proft M."/>
            <person name="Purnelle B."/>
            <person name="Ramezani Rad M."/>
            <person name="Rieger M."/>
            <person name="Rose M."/>
            <person name="Schaaff-Gerstenschlaeger I."/>
            <person name="Scherens B."/>
            <person name="Schwarzlose C."/>
            <person name="Skala J."/>
            <person name="Slonimski P.P."/>
            <person name="Smits P.H.M."/>
            <person name="Souciet J.-L."/>
            <person name="Steensma H.Y."/>
            <person name="Stucka R."/>
            <person name="Urrestarazu L.A."/>
            <person name="van der Aart Q.J.M."/>
            <person name="Van Dyck L."/>
            <person name="Vassarotti A."/>
            <person name="Vetter I."/>
            <person name="Vierendeels F."/>
            <person name="Vissers S."/>
            <person name="Wagner G."/>
            <person name="de Wergifosse P."/>
            <person name="Wolfe K.H."/>
            <person name="Zagulski M."/>
            <person name="Zimmermann F.K."/>
            <person name="Mewes H.-W."/>
            <person name="Kleine K."/>
        </authorList>
    </citation>
    <scope>NUCLEOTIDE SEQUENCE [LARGE SCALE GENOMIC DNA]</scope>
    <source>
        <strain>ATCC 204508 / S288c</strain>
    </source>
</reference>
<reference key="3">
    <citation type="journal article" date="2014" name="G3 (Bethesda)">
        <title>The reference genome sequence of Saccharomyces cerevisiae: Then and now.</title>
        <authorList>
            <person name="Engel S.R."/>
            <person name="Dietrich F.S."/>
            <person name="Fisk D.G."/>
            <person name="Binkley G."/>
            <person name="Balakrishnan R."/>
            <person name="Costanzo M.C."/>
            <person name="Dwight S.S."/>
            <person name="Hitz B.C."/>
            <person name="Karra K."/>
            <person name="Nash R.S."/>
            <person name="Weng S."/>
            <person name="Wong E.D."/>
            <person name="Lloyd P."/>
            <person name="Skrzypek M.S."/>
            <person name="Miyasato S.R."/>
            <person name="Simison M."/>
            <person name="Cherry J.M."/>
        </authorList>
    </citation>
    <scope>GENOME REANNOTATION</scope>
    <source>
        <strain>ATCC 204508 / S288c</strain>
    </source>
</reference>
<reference key="4">
    <citation type="journal article" date="2002" name="Genome Res.">
        <title>Parallel identification of new genes in Saccharomyces cerevisiae.</title>
        <authorList>
            <person name="Oshiro G."/>
            <person name="Wodicka L.M."/>
            <person name="Washburn M.P."/>
            <person name="Yates J.R. III"/>
            <person name="Lockhart D.J."/>
            <person name="Winzeler E.A."/>
        </authorList>
    </citation>
    <scope>IDENTIFICATION BY MASS SPECTROMETRY</scope>
</reference>
<sequence>MWGLNRWLTFTMLILLITSHCCYWNKR</sequence>